<reference key="1">
    <citation type="submission" date="2007-03" db="EMBL/GenBank/DDBJ databases">
        <authorList>
            <consortium name="NIH - Mammalian Gene Collection (MGC) project"/>
        </authorList>
    </citation>
    <scope>NUCLEOTIDE SEQUENCE [LARGE SCALE MRNA]</scope>
    <source>
        <strain>Hereford</strain>
        <tissue>Thymus</tissue>
    </source>
</reference>
<evidence type="ECO:0000250" key="1">
    <source>
        <dbReference type="UniProtKB" id="Q5SR56"/>
    </source>
</evidence>
<evidence type="ECO:0000255" key="2"/>
<evidence type="ECO:0000256" key="3">
    <source>
        <dbReference type="SAM" id="MobiDB-lite"/>
    </source>
</evidence>
<evidence type="ECO:0000305" key="4"/>
<gene>
    <name evidence="1" type="primary">MFSD14B</name>
    <name evidence="1" type="synonym">HIATL1</name>
</gene>
<proteinExistence type="evidence at transcript level"/>
<comment type="subcellular location">
    <subcellularLocation>
        <location evidence="4">Membrane</location>
        <topology evidence="4">Multi-pass membrane protein</topology>
    </subcellularLocation>
</comment>
<comment type="similarity">
    <text evidence="4">Belongs to the major facilitator superfamily.</text>
</comment>
<protein>
    <recommendedName>
        <fullName evidence="1">Hippocampus abundant transcript-like protein 1</fullName>
    </recommendedName>
    <alternativeName>
        <fullName evidence="1">Major facilitator superfamily domain-containing 14B</fullName>
    </alternativeName>
</protein>
<organism>
    <name type="scientific">Bos taurus</name>
    <name type="common">Bovine</name>
    <dbReference type="NCBI Taxonomy" id="9913"/>
    <lineage>
        <taxon>Eukaryota</taxon>
        <taxon>Metazoa</taxon>
        <taxon>Chordata</taxon>
        <taxon>Craniata</taxon>
        <taxon>Vertebrata</taxon>
        <taxon>Euteleostomi</taxon>
        <taxon>Mammalia</taxon>
        <taxon>Eutheria</taxon>
        <taxon>Laurasiatheria</taxon>
        <taxon>Artiodactyla</taxon>
        <taxon>Ruminantia</taxon>
        <taxon>Pecora</taxon>
        <taxon>Bovidae</taxon>
        <taxon>Bovinae</taxon>
        <taxon>Bos</taxon>
    </lineage>
</organism>
<keyword id="KW-0472">Membrane</keyword>
<keyword id="KW-1185">Reference proteome</keyword>
<keyword id="KW-0812">Transmembrane</keyword>
<keyword id="KW-1133">Transmembrane helix</keyword>
<keyword id="KW-0813">Transport</keyword>
<accession>A4IF94</accession>
<dbReference type="EMBL" id="BC134465">
    <property type="protein sequence ID" value="AAI34466.1"/>
    <property type="molecule type" value="mRNA"/>
</dbReference>
<dbReference type="RefSeq" id="NP_001077131.1">
    <property type="nucleotide sequence ID" value="NM_001083662.2"/>
</dbReference>
<dbReference type="SMR" id="A4IF94"/>
<dbReference type="FunCoup" id="A4IF94">
    <property type="interactions" value="2668"/>
</dbReference>
<dbReference type="STRING" id="9913.ENSBTAP00000004062"/>
<dbReference type="PaxDb" id="9913-ENSBTAP00000004062"/>
<dbReference type="Ensembl" id="ENSBTAT00000004062.6">
    <property type="protein sequence ID" value="ENSBTAP00000004062.5"/>
    <property type="gene ID" value="ENSBTAG00000003124.7"/>
</dbReference>
<dbReference type="GeneID" id="510635"/>
<dbReference type="KEGG" id="bta:510635"/>
<dbReference type="CTD" id="84641"/>
<dbReference type="VEuPathDB" id="HostDB:ENSBTAG00000003124"/>
<dbReference type="VGNC" id="VGNC:50087">
    <property type="gene designation" value="MFSD14B"/>
</dbReference>
<dbReference type="eggNOG" id="KOG2816">
    <property type="taxonomic scope" value="Eukaryota"/>
</dbReference>
<dbReference type="GeneTree" id="ENSGT00940000156081"/>
<dbReference type="HOGENOM" id="CLU_001265_10_5_1"/>
<dbReference type="InParanoid" id="A4IF94"/>
<dbReference type="OMA" id="LELMWYG"/>
<dbReference type="OrthoDB" id="419616at2759"/>
<dbReference type="TreeFam" id="TF313511"/>
<dbReference type="Proteomes" id="UP000009136">
    <property type="component" value="Chromosome 8"/>
</dbReference>
<dbReference type="Bgee" id="ENSBTAG00000003124">
    <property type="expression patterns" value="Expressed in monocyte and 104 other cell types or tissues"/>
</dbReference>
<dbReference type="GO" id="GO:0016020">
    <property type="term" value="C:membrane"/>
    <property type="evidence" value="ECO:0007669"/>
    <property type="project" value="UniProtKB-SubCell"/>
</dbReference>
<dbReference type="GO" id="GO:0022857">
    <property type="term" value="F:transmembrane transporter activity"/>
    <property type="evidence" value="ECO:0007669"/>
    <property type="project" value="InterPro"/>
</dbReference>
<dbReference type="CDD" id="cd17387">
    <property type="entry name" value="MFS_MFSD14"/>
    <property type="match status" value="1"/>
</dbReference>
<dbReference type="Gene3D" id="1.20.1250.20">
    <property type="entry name" value="MFS general substrate transporter like domains"/>
    <property type="match status" value="1"/>
</dbReference>
<dbReference type="InterPro" id="IPR011701">
    <property type="entry name" value="MFS"/>
</dbReference>
<dbReference type="InterPro" id="IPR020846">
    <property type="entry name" value="MFS_dom"/>
</dbReference>
<dbReference type="InterPro" id="IPR036259">
    <property type="entry name" value="MFS_trans_sf"/>
</dbReference>
<dbReference type="InterPro" id="IPR005829">
    <property type="entry name" value="Sugar_transporter_CS"/>
</dbReference>
<dbReference type="InterPro" id="IPR001958">
    <property type="entry name" value="Tet-R_TetA/multi-R_MdtG-like"/>
</dbReference>
<dbReference type="PANTHER" id="PTHR23504:SF32">
    <property type="entry name" value="HIPPOCAMPUS ABUNDANT TRANSCRIPT-LIKE PROTEIN 1"/>
    <property type="match status" value="1"/>
</dbReference>
<dbReference type="PANTHER" id="PTHR23504">
    <property type="entry name" value="MAJOR FACILITATOR SUPERFAMILY DOMAIN-CONTAINING PROTEIN 10"/>
    <property type="match status" value="1"/>
</dbReference>
<dbReference type="Pfam" id="PF07690">
    <property type="entry name" value="MFS_1"/>
    <property type="match status" value="1"/>
</dbReference>
<dbReference type="PRINTS" id="PR01035">
    <property type="entry name" value="TCRTETA"/>
</dbReference>
<dbReference type="SUPFAM" id="SSF103473">
    <property type="entry name" value="MFS general substrate transporter"/>
    <property type="match status" value="1"/>
</dbReference>
<dbReference type="PROSITE" id="PS50850">
    <property type="entry name" value="MFS"/>
    <property type="match status" value="1"/>
</dbReference>
<dbReference type="PROSITE" id="PS00216">
    <property type="entry name" value="SUGAR_TRANSPORT_1"/>
    <property type="match status" value="1"/>
</dbReference>
<sequence length="502" mass="54144">MNAEPPEEKAASEAEAGAMPEKRAGSRAAGGNSLQGFGRPSVYHAAIVIFLEFFAWGLLTTSMLTVLHETFPQHTFLMNGLIQGVKGLLSFLSAPLIGALSDVWGRKPFLLGTVFFTCFPIPLMRISPWWYFAMISISGVFSVTFSVIFAYVADVTQEHERSTAYGWVSATFAASLVSSPAIGAYLSASYGDSLVVLVATVVALLDICFILLAVPESLPEKMRPLSWGARISWKQADPFASLKKVGKDSTILLICITVFLSYLPEAGQYSSFFLYLRQVIGFGSIKIAAFIAMVGILSIVAQTVFLTSLMRSLGNKNTVLLGLGFQMFQLAWYGFGSQAWMMWAAGIVAAVSSITFPAVSTLVSQNADSNQQGVAQGIITGIRGLCNGLGPALYGFIFYMFHVELTELEPELISNNAALQGAVIPGPPFLFGACIVFMSFLVAVFIPEYSKGGIQKHSNSISGSLANTPERGSDEDIEPLLQDSSIWELSSLEEPGHQCTEL</sequence>
<name>MF14B_BOVIN</name>
<feature type="chain" id="PRO_0000375848" description="Hippocampus abundant transcript-like protein 1">
    <location>
        <begin position="1"/>
        <end position="502"/>
    </location>
</feature>
<feature type="topological domain" description="Extracellular" evidence="2">
    <location>
        <begin position="1"/>
        <end position="46"/>
    </location>
</feature>
<feature type="transmembrane region" description="Helical" evidence="2">
    <location>
        <begin position="47"/>
        <end position="67"/>
    </location>
</feature>
<feature type="topological domain" description="Cytoplasmic" evidence="2">
    <location>
        <begin position="68"/>
        <end position="79"/>
    </location>
</feature>
<feature type="transmembrane region" description="Helical" evidence="2">
    <location>
        <begin position="80"/>
        <end position="100"/>
    </location>
</feature>
<feature type="topological domain" description="Extracellular" evidence="2">
    <location>
        <begin position="101"/>
        <end position="108"/>
    </location>
</feature>
<feature type="transmembrane region" description="Helical" evidence="2">
    <location>
        <begin position="109"/>
        <end position="129"/>
    </location>
</feature>
<feature type="topological domain" description="Cytoplasmic" evidence="2">
    <location>
        <begin position="130"/>
        <end position="131"/>
    </location>
</feature>
<feature type="transmembrane region" description="Helical" evidence="2">
    <location>
        <begin position="132"/>
        <end position="152"/>
    </location>
</feature>
<feature type="topological domain" description="Extracellular" evidence="2">
    <location>
        <begin position="153"/>
        <end position="165"/>
    </location>
</feature>
<feature type="transmembrane region" description="Helical" evidence="2">
    <location>
        <begin position="166"/>
        <end position="186"/>
    </location>
</feature>
<feature type="topological domain" description="Cytoplasmic" evidence="2">
    <location>
        <begin position="187"/>
        <end position="193"/>
    </location>
</feature>
<feature type="transmembrane region" description="Helical" evidence="2">
    <location>
        <begin position="194"/>
        <end position="214"/>
    </location>
</feature>
<feature type="topological domain" description="Extracellular" evidence="2">
    <location>
        <begin position="215"/>
        <end position="248"/>
    </location>
</feature>
<feature type="transmembrane region" description="Helical" evidence="2">
    <location>
        <begin position="249"/>
        <end position="269"/>
    </location>
</feature>
<feature type="topological domain" description="Cytoplasmic" evidence="2">
    <location>
        <begin position="270"/>
        <end position="278"/>
    </location>
</feature>
<feature type="transmembrane region" description="Helical" evidence="2">
    <location>
        <begin position="279"/>
        <end position="299"/>
    </location>
</feature>
<feature type="topological domain" description="Extracellular" evidence="2">
    <location>
        <begin position="300"/>
        <end position="316"/>
    </location>
</feature>
<feature type="transmembrane region" description="Helical" evidence="2">
    <location>
        <begin position="317"/>
        <end position="337"/>
    </location>
</feature>
<feature type="topological domain" description="Cytoplasmic" evidence="2">
    <location>
        <position position="338"/>
    </location>
</feature>
<feature type="transmembrane region" description="Helical" evidence="2">
    <location>
        <begin position="339"/>
        <end position="359"/>
    </location>
</feature>
<feature type="topological domain" description="Extracellular" evidence="2">
    <location>
        <begin position="360"/>
        <end position="384"/>
    </location>
</feature>
<feature type="transmembrane region" description="Helical" evidence="2">
    <location>
        <begin position="385"/>
        <end position="405"/>
    </location>
</feature>
<feature type="topological domain" description="Cytoplasmic" evidence="2">
    <location>
        <begin position="406"/>
        <end position="425"/>
    </location>
</feature>
<feature type="transmembrane region" description="Helical" evidence="2">
    <location>
        <begin position="426"/>
        <end position="446"/>
    </location>
</feature>
<feature type="topological domain" description="Extracellular" evidence="2">
    <location>
        <begin position="447"/>
        <end position="502"/>
    </location>
</feature>
<feature type="region of interest" description="Disordered" evidence="3">
    <location>
        <begin position="1"/>
        <end position="27"/>
    </location>
</feature>
<feature type="compositionally biased region" description="Basic and acidic residues" evidence="3">
    <location>
        <begin position="1"/>
        <end position="12"/>
    </location>
</feature>